<protein>
    <recommendedName>
        <fullName>Uncharacterized solute-binding protein Ta1052</fullName>
    </recommendedName>
</protein>
<dbReference type="EMBL" id="AL445066">
    <property type="protein sequence ID" value="CAC12180.1"/>
    <property type="molecule type" value="Genomic_DNA"/>
</dbReference>
<dbReference type="RefSeq" id="WP_010901463.1">
    <property type="nucleotide sequence ID" value="NC_002578.1"/>
</dbReference>
<dbReference type="SMR" id="Q9HJB8"/>
<dbReference type="FunCoup" id="Q9HJB8">
    <property type="interactions" value="10"/>
</dbReference>
<dbReference type="STRING" id="273075.gene:9572272"/>
<dbReference type="PaxDb" id="273075-Ta1052"/>
<dbReference type="EnsemblBacteria" id="CAC12180">
    <property type="protein sequence ID" value="CAC12180"/>
    <property type="gene ID" value="CAC12180"/>
</dbReference>
<dbReference type="KEGG" id="tac:Ta1052"/>
<dbReference type="eggNOG" id="arCOG00219">
    <property type="taxonomic scope" value="Archaea"/>
</dbReference>
<dbReference type="HOGENOM" id="CLU_709076_0_0_2"/>
<dbReference type="InParanoid" id="Q9HJB8"/>
<dbReference type="OrthoDB" id="56205at2157"/>
<dbReference type="Proteomes" id="UP000001024">
    <property type="component" value="Chromosome"/>
</dbReference>
<dbReference type="GO" id="GO:0030973">
    <property type="term" value="F:molybdate ion binding"/>
    <property type="evidence" value="ECO:0007669"/>
    <property type="project" value="TreeGrafter"/>
</dbReference>
<dbReference type="GO" id="GO:0015689">
    <property type="term" value="P:molybdate ion transport"/>
    <property type="evidence" value="ECO:0007669"/>
    <property type="project" value="TreeGrafter"/>
</dbReference>
<dbReference type="CDD" id="cd13540">
    <property type="entry name" value="PBP2_ModA_WtpA"/>
    <property type="match status" value="1"/>
</dbReference>
<dbReference type="Gene3D" id="3.40.190.10">
    <property type="entry name" value="Periplasmic binding protein-like II"/>
    <property type="match status" value="1"/>
</dbReference>
<dbReference type="InterPro" id="IPR050682">
    <property type="entry name" value="ModA/WtpA"/>
</dbReference>
<dbReference type="PANTHER" id="PTHR30632">
    <property type="entry name" value="MOLYBDATE-BINDING PERIPLASMIC PROTEIN"/>
    <property type="match status" value="1"/>
</dbReference>
<dbReference type="PANTHER" id="PTHR30632:SF16">
    <property type="entry name" value="MOLYBDATE_TUNGSTATE-BINDING PROTEIN WTPA"/>
    <property type="match status" value="1"/>
</dbReference>
<dbReference type="Pfam" id="PF13531">
    <property type="entry name" value="SBP_bac_11"/>
    <property type="match status" value="1"/>
</dbReference>
<dbReference type="SUPFAM" id="SSF53850">
    <property type="entry name" value="Periplasmic binding protein-like II"/>
    <property type="match status" value="1"/>
</dbReference>
<gene>
    <name type="ordered locus">Ta1052</name>
</gene>
<organism>
    <name type="scientific">Thermoplasma acidophilum (strain ATCC 25905 / DSM 1728 / JCM 9062 / NBRC 15155 / AMRC-C165)</name>
    <dbReference type="NCBI Taxonomy" id="273075"/>
    <lineage>
        <taxon>Archaea</taxon>
        <taxon>Methanobacteriati</taxon>
        <taxon>Thermoplasmatota</taxon>
        <taxon>Thermoplasmata</taxon>
        <taxon>Thermoplasmatales</taxon>
        <taxon>Thermoplasmataceae</taxon>
        <taxon>Thermoplasma</taxon>
    </lineage>
</organism>
<name>Y1052_THEAC</name>
<feature type="signal peptide" evidence="1">
    <location>
        <begin position="1"/>
        <end position="31"/>
    </location>
</feature>
<feature type="chain" id="PRO_0000159728" description="Uncharacterized solute-binding protein Ta1052">
    <location>
        <begin position="32"/>
        <end position="400"/>
    </location>
</feature>
<proteinExistence type="inferred from homology"/>
<keyword id="KW-1185">Reference proteome</keyword>
<keyword id="KW-0732">Signal</keyword>
<sequence>MENPIKPVATRSIGIAVVLLVVGIVIGFAVGHYTVATAPSKPAINTFAAGSLKYALGNDFNPQYTNLTGVRVGMTFSGSISGAREVQEGKNYSVFISASAPILYQDLMNDTHYASWQIIFSANEMAITWTNPKYSILPSWPYWFENITENSTIVAASNASLDPSGFQAIETMKLAGLLYTGWDNSSILVGNEPVSYYVRLAFDDNFAMYMNYNKAYNDWFHGQFGYPVNDSLALYHQIFISKYLNGTTKLTTVEIGLDGYLTAGTADYALTYVSQAINQGLSYYENSTGGNGLPAWINLGSVNKTIDDFYEQINESGPAWDNVGNLPGAPIFYSITVISNYTNPYAIQYVYDLITGLGQHYLSMSKFDPLAQPFYVGDVPAQLKPLVVAPPSYLPVSSYD</sequence>
<comment type="similarity">
    <text evidence="2">Belongs to the bacterial solute-binding protein 1 family. WtpA subfamily.</text>
</comment>
<evidence type="ECO:0000255" key="1"/>
<evidence type="ECO:0000305" key="2"/>
<reference key="1">
    <citation type="journal article" date="2000" name="Nature">
        <title>The genome sequence of the thermoacidophilic scavenger Thermoplasma acidophilum.</title>
        <authorList>
            <person name="Ruepp A."/>
            <person name="Graml W."/>
            <person name="Santos-Martinez M.-L."/>
            <person name="Koretke K.K."/>
            <person name="Volker C."/>
            <person name="Mewes H.-W."/>
            <person name="Frishman D."/>
            <person name="Stocker S."/>
            <person name="Lupas A.N."/>
            <person name="Baumeister W."/>
        </authorList>
    </citation>
    <scope>NUCLEOTIDE SEQUENCE [LARGE SCALE GENOMIC DNA]</scope>
    <source>
        <strain>ATCC 25905 / DSM 1728 / JCM 9062 / NBRC 15155 / AMRC-C165</strain>
    </source>
</reference>
<accession>Q9HJB8</accession>